<evidence type="ECO:0000255" key="1">
    <source>
        <dbReference type="HAMAP-Rule" id="MF_00176"/>
    </source>
</evidence>
<organism>
    <name type="scientific">Wolbachia pipientis subsp. Culex pipiens (strain wPip)</name>
    <dbReference type="NCBI Taxonomy" id="570417"/>
    <lineage>
        <taxon>Bacteria</taxon>
        <taxon>Pseudomonadati</taxon>
        <taxon>Pseudomonadota</taxon>
        <taxon>Alphaproteobacteria</taxon>
        <taxon>Rickettsiales</taxon>
        <taxon>Anaplasmataceae</taxon>
        <taxon>Wolbachieae</taxon>
        <taxon>Wolbachia</taxon>
    </lineage>
</organism>
<keyword id="KW-0030">Aminoacyl-tRNA synthetase</keyword>
<keyword id="KW-0067">ATP-binding</keyword>
<keyword id="KW-0963">Cytoplasm</keyword>
<keyword id="KW-0436">Ligase</keyword>
<keyword id="KW-0547">Nucleotide-binding</keyword>
<keyword id="KW-0648">Protein biosynthesis</keyword>
<accession>B3CQ06</accession>
<gene>
    <name evidence="1" type="primary">serS</name>
    <name type="ordered locus">WP0551</name>
</gene>
<sequence>MHDIEHIRKNPKGFEKAIKSRGVKEFTAKEILEIDHKKRSLTTKLQALNKQRNEVTEEIKRLKMNKSPCEEQVKLSKSITSEIETISLKEQTEKNKLVDILSNLPNISAQNVPIGEDESSNVEIRKYGKKRKFDFTPKFHYELGERLGLMDFEQAAKISGSRFTILKGQLAKLGRALINFMLETHVNEFAYTEVYHPALVKNEAMYNVGQLPKFSDDSYLTTDKLRLIPTSEVVLTNLVADKIIEEKELPIRFTAYSECFRKEAGSAGRDTRGMIRQHQFGKVELVSITTEDQSKDELERMTNAAEEILKKLELPYRIMLLCSGDMGFAAQKTYDIEVWLPEQNKYREISSCSNCGTFQARRMNTKYFLETDRKTKKYVHTLNGSALAIGRTIVAIMENYQNSDGSVTIPNVLQRYMSNDTVISKQ</sequence>
<comment type="function">
    <text evidence="1">Catalyzes the attachment of serine to tRNA(Ser). Is also able to aminoacylate tRNA(Sec) with serine, to form the misacylated tRNA L-seryl-tRNA(Sec), which will be further converted into selenocysteinyl-tRNA(Sec).</text>
</comment>
<comment type="catalytic activity">
    <reaction evidence="1">
        <text>tRNA(Ser) + L-serine + ATP = L-seryl-tRNA(Ser) + AMP + diphosphate + H(+)</text>
        <dbReference type="Rhea" id="RHEA:12292"/>
        <dbReference type="Rhea" id="RHEA-COMP:9669"/>
        <dbReference type="Rhea" id="RHEA-COMP:9703"/>
        <dbReference type="ChEBI" id="CHEBI:15378"/>
        <dbReference type="ChEBI" id="CHEBI:30616"/>
        <dbReference type="ChEBI" id="CHEBI:33019"/>
        <dbReference type="ChEBI" id="CHEBI:33384"/>
        <dbReference type="ChEBI" id="CHEBI:78442"/>
        <dbReference type="ChEBI" id="CHEBI:78533"/>
        <dbReference type="ChEBI" id="CHEBI:456215"/>
        <dbReference type="EC" id="6.1.1.11"/>
    </reaction>
</comment>
<comment type="catalytic activity">
    <reaction evidence="1">
        <text>tRNA(Sec) + L-serine + ATP = L-seryl-tRNA(Sec) + AMP + diphosphate + H(+)</text>
        <dbReference type="Rhea" id="RHEA:42580"/>
        <dbReference type="Rhea" id="RHEA-COMP:9742"/>
        <dbReference type="Rhea" id="RHEA-COMP:10128"/>
        <dbReference type="ChEBI" id="CHEBI:15378"/>
        <dbReference type="ChEBI" id="CHEBI:30616"/>
        <dbReference type="ChEBI" id="CHEBI:33019"/>
        <dbReference type="ChEBI" id="CHEBI:33384"/>
        <dbReference type="ChEBI" id="CHEBI:78442"/>
        <dbReference type="ChEBI" id="CHEBI:78533"/>
        <dbReference type="ChEBI" id="CHEBI:456215"/>
        <dbReference type="EC" id="6.1.1.11"/>
    </reaction>
</comment>
<comment type="pathway">
    <text evidence="1">Aminoacyl-tRNA biosynthesis; selenocysteinyl-tRNA(Sec) biosynthesis; L-seryl-tRNA(Sec) from L-serine and tRNA(Sec): step 1/1.</text>
</comment>
<comment type="subunit">
    <text evidence="1">Homodimer. The tRNA molecule binds across the dimer.</text>
</comment>
<comment type="subcellular location">
    <subcellularLocation>
        <location evidence="1">Cytoplasm</location>
    </subcellularLocation>
</comment>
<comment type="domain">
    <text evidence="1">Consists of two distinct domains, a catalytic core and a N-terminal extension that is involved in tRNA binding.</text>
</comment>
<comment type="similarity">
    <text evidence="1">Belongs to the class-II aminoacyl-tRNA synthetase family. Type-1 seryl-tRNA synthetase subfamily.</text>
</comment>
<reference key="1">
    <citation type="journal article" date="2008" name="Mol. Biol. Evol.">
        <title>Genome evolution of Wolbachia strain wPip from the Culex pipiens group.</title>
        <authorList>
            <person name="Klasson L."/>
            <person name="Walker T."/>
            <person name="Sebaihia M."/>
            <person name="Sanders M.J."/>
            <person name="Quail M.A."/>
            <person name="Lord A."/>
            <person name="Sanders S."/>
            <person name="Earl J."/>
            <person name="O'Neill S.L."/>
            <person name="Thomson N."/>
            <person name="Sinkins S.P."/>
            <person name="Parkhill J."/>
        </authorList>
    </citation>
    <scope>NUCLEOTIDE SEQUENCE [LARGE SCALE GENOMIC DNA]</scope>
    <source>
        <strain>wPip</strain>
    </source>
</reference>
<proteinExistence type="inferred from homology"/>
<name>SYS_WOLPP</name>
<dbReference type="EC" id="6.1.1.11" evidence="1"/>
<dbReference type="EMBL" id="AM999887">
    <property type="protein sequence ID" value="CAQ54659.1"/>
    <property type="molecule type" value="Genomic_DNA"/>
</dbReference>
<dbReference type="RefSeq" id="WP_012481855.1">
    <property type="nucleotide sequence ID" value="NC_010981.1"/>
</dbReference>
<dbReference type="SMR" id="B3CQ06"/>
<dbReference type="KEGG" id="wpi:WP0551"/>
<dbReference type="eggNOG" id="COG0172">
    <property type="taxonomic scope" value="Bacteria"/>
</dbReference>
<dbReference type="HOGENOM" id="CLU_023797_1_1_5"/>
<dbReference type="UniPathway" id="UPA00906">
    <property type="reaction ID" value="UER00895"/>
</dbReference>
<dbReference type="Proteomes" id="UP000008814">
    <property type="component" value="Chromosome"/>
</dbReference>
<dbReference type="GO" id="GO:0005737">
    <property type="term" value="C:cytoplasm"/>
    <property type="evidence" value="ECO:0007669"/>
    <property type="project" value="UniProtKB-SubCell"/>
</dbReference>
<dbReference type="GO" id="GO:0005524">
    <property type="term" value="F:ATP binding"/>
    <property type="evidence" value="ECO:0007669"/>
    <property type="project" value="UniProtKB-UniRule"/>
</dbReference>
<dbReference type="GO" id="GO:0004828">
    <property type="term" value="F:serine-tRNA ligase activity"/>
    <property type="evidence" value="ECO:0007669"/>
    <property type="project" value="UniProtKB-UniRule"/>
</dbReference>
<dbReference type="GO" id="GO:0016260">
    <property type="term" value="P:selenocysteine biosynthetic process"/>
    <property type="evidence" value="ECO:0007669"/>
    <property type="project" value="UniProtKB-UniRule"/>
</dbReference>
<dbReference type="GO" id="GO:0006434">
    <property type="term" value="P:seryl-tRNA aminoacylation"/>
    <property type="evidence" value="ECO:0007669"/>
    <property type="project" value="UniProtKB-UniRule"/>
</dbReference>
<dbReference type="CDD" id="cd00770">
    <property type="entry name" value="SerRS_core"/>
    <property type="match status" value="1"/>
</dbReference>
<dbReference type="Gene3D" id="3.30.930.10">
    <property type="entry name" value="Bira Bifunctional Protein, Domain 2"/>
    <property type="match status" value="1"/>
</dbReference>
<dbReference type="Gene3D" id="1.10.287.40">
    <property type="entry name" value="Serine-tRNA synthetase, tRNA binding domain"/>
    <property type="match status" value="1"/>
</dbReference>
<dbReference type="HAMAP" id="MF_00176">
    <property type="entry name" value="Ser_tRNA_synth_type1"/>
    <property type="match status" value="1"/>
</dbReference>
<dbReference type="InterPro" id="IPR002314">
    <property type="entry name" value="aa-tRNA-synt_IIb"/>
</dbReference>
<dbReference type="InterPro" id="IPR006195">
    <property type="entry name" value="aa-tRNA-synth_II"/>
</dbReference>
<dbReference type="InterPro" id="IPR045864">
    <property type="entry name" value="aa-tRNA-synth_II/BPL/LPL"/>
</dbReference>
<dbReference type="InterPro" id="IPR002317">
    <property type="entry name" value="Ser-tRNA-ligase_type_1"/>
</dbReference>
<dbReference type="InterPro" id="IPR015866">
    <property type="entry name" value="Ser-tRNA-synth_1_N"/>
</dbReference>
<dbReference type="InterPro" id="IPR042103">
    <property type="entry name" value="SerRS_1_N_sf"/>
</dbReference>
<dbReference type="InterPro" id="IPR033729">
    <property type="entry name" value="SerRS_core"/>
</dbReference>
<dbReference type="InterPro" id="IPR010978">
    <property type="entry name" value="tRNA-bd_arm"/>
</dbReference>
<dbReference type="NCBIfam" id="TIGR00414">
    <property type="entry name" value="serS"/>
    <property type="match status" value="1"/>
</dbReference>
<dbReference type="PANTHER" id="PTHR43697:SF1">
    <property type="entry name" value="SERINE--TRNA LIGASE"/>
    <property type="match status" value="1"/>
</dbReference>
<dbReference type="PANTHER" id="PTHR43697">
    <property type="entry name" value="SERYL-TRNA SYNTHETASE"/>
    <property type="match status" value="1"/>
</dbReference>
<dbReference type="Pfam" id="PF02403">
    <property type="entry name" value="Seryl_tRNA_N"/>
    <property type="match status" value="1"/>
</dbReference>
<dbReference type="Pfam" id="PF00587">
    <property type="entry name" value="tRNA-synt_2b"/>
    <property type="match status" value="1"/>
</dbReference>
<dbReference type="PIRSF" id="PIRSF001529">
    <property type="entry name" value="Ser-tRNA-synth_IIa"/>
    <property type="match status" value="1"/>
</dbReference>
<dbReference type="PRINTS" id="PR00981">
    <property type="entry name" value="TRNASYNTHSER"/>
</dbReference>
<dbReference type="SUPFAM" id="SSF55681">
    <property type="entry name" value="Class II aaRS and biotin synthetases"/>
    <property type="match status" value="1"/>
</dbReference>
<dbReference type="SUPFAM" id="SSF46589">
    <property type="entry name" value="tRNA-binding arm"/>
    <property type="match status" value="1"/>
</dbReference>
<dbReference type="PROSITE" id="PS50862">
    <property type="entry name" value="AA_TRNA_LIGASE_II"/>
    <property type="match status" value="1"/>
</dbReference>
<protein>
    <recommendedName>
        <fullName evidence="1">Serine--tRNA ligase</fullName>
        <ecNumber evidence="1">6.1.1.11</ecNumber>
    </recommendedName>
    <alternativeName>
        <fullName evidence="1">Seryl-tRNA synthetase</fullName>
        <shortName evidence="1">SerRS</shortName>
    </alternativeName>
    <alternativeName>
        <fullName evidence="1">Seryl-tRNA(Ser/Sec) synthetase</fullName>
    </alternativeName>
</protein>
<feature type="chain" id="PRO_1000098145" description="Serine--tRNA ligase">
    <location>
        <begin position="1"/>
        <end position="426"/>
    </location>
</feature>
<feature type="binding site" evidence="1">
    <location>
        <begin position="230"/>
        <end position="232"/>
    </location>
    <ligand>
        <name>L-serine</name>
        <dbReference type="ChEBI" id="CHEBI:33384"/>
    </ligand>
</feature>
<feature type="binding site" evidence="1">
    <location>
        <begin position="261"/>
        <end position="263"/>
    </location>
    <ligand>
        <name>ATP</name>
        <dbReference type="ChEBI" id="CHEBI:30616"/>
    </ligand>
</feature>
<feature type="binding site" evidence="1">
    <location>
        <position position="284"/>
    </location>
    <ligand>
        <name>L-serine</name>
        <dbReference type="ChEBI" id="CHEBI:33384"/>
    </ligand>
</feature>
<feature type="binding site" evidence="1">
    <location>
        <begin position="348"/>
        <end position="351"/>
    </location>
    <ligand>
        <name>ATP</name>
        <dbReference type="ChEBI" id="CHEBI:30616"/>
    </ligand>
</feature>
<feature type="binding site" evidence="1">
    <location>
        <position position="385"/>
    </location>
    <ligand>
        <name>L-serine</name>
        <dbReference type="ChEBI" id="CHEBI:33384"/>
    </ligand>
</feature>